<accession>Q4PNY0</accession>
<proteinExistence type="inferred from homology"/>
<organism>
    <name type="scientific">Pichia kudriavzevii</name>
    <name type="common">Yeast</name>
    <name type="synonym">Issatchenkia orientalis</name>
    <dbReference type="NCBI Taxonomy" id="4909"/>
    <lineage>
        <taxon>Eukaryota</taxon>
        <taxon>Fungi</taxon>
        <taxon>Dikarya</taxon>
        <taxon>Ascomycota</taxon>
        <taxon>Saccharomycotina</taxon>
        <taxon>Pichiomycetes</taxon>
        <taxon>Pichiales</taxon>
        <taxon>Pichiaceae</taxon>
        <taxon>Pichia</taxon>
    </lineage>
</organism>
<dbReference type="EMBL" id="DQ063217">
    <property type="protein sequence ID" value="AAY62379.1"/>
    <property type="molecule type" value="Genomic_DNA"/>
</dbReference>
<dbReference type="SMR" id="Q4PNY0"/>
<dbReference type="VEuPathDB" id="FungiDB:C5L36_0E00370"/>
<dbReference type="GO" id="GO:1990904">
    <property type="term" value="C:ribonucleoprotein complex"/>
    <property type="evidence" value="ECO:0007669"/>
    <property type="project" value="UniProtKB-KW"/>
</dbReference>
<dbReference type="GO" id="GO:0005840">
    <property type="term" value="C:ribosome"/>
    <property type="evidence" value="ECO:0007669"/>
    <property type="project" value="UniProtKB-KW"/>
</dbReference>
<dbReference type="GO" id="GO:0003735">
    <property type="term" value="F:structural constituent of ribosome"/>
    <property type="evidence" value="ECO:0007669"/>
    <property type="project" value="InterPro"/>
</dbReference>
<dbReference type="GO" id="GO:0006412">
    <property type="term" value="P:translation"/>
    <property type="evidence" value="ECO:0007669"/>
    <property type="project" value="InterPro"/>
</dbReference>
<dbReference type="FunFam" id="3.10.450.80:FF:000001">
    <property type="entry name" value="60S ribosomal protein L44"/>
    <property type="match status" value="1"/>
</dbReference>
<dbReference type="Gene3D" id="3.10.450.80">
    <property type="match status" value="1"/>
</dbReference>
<dbReference type="InterPro" id="IPR000552">
    <property type="entry name" value="Ribosomal_eL44"/>
</dbReference>
<dbReference type="InterPro" id="IPR053708">
    <property type="entry name" value="Ribosomal_LSU_eL42"/>
</dbReference>
<dbReference type="InterPro" id="IPR011332">
    <property type="entry name" value="Ribosomal_zn-bd"/>
</dbReference>
<dbReference type="PANTHER" id="PTHR10369">
    <property type="entry name" value="60S RIBOSOMAL PROTEIN L36A/L44"/>
    <property type="match status" value="1"/>
</dbReference>
<dbReference type="Pfam" id="PF00935">
    <property type="entry name" value="Ribosomal_L44"/>
    <property type="match status" value="1"/>
</dbReference>
<dbReference type="SUPFAM" id="SSF57829">
    <property type="entry name" value="Zn-binding ribosomal proteins"/>
    <property type="match status" value="1"/>
</dbReference>
<dbReference type="PROSITE" id="PS01172">
    <property type="entry name" value="RIBOSOMAL_L44E"/>
    <property type="match status" value="1"/>
</dbReference>
<reference key="1">
    <citation type="submission" date="2005-05" db="EMBL/GenBank/DDBJ databases">
        <title>Nucleotide sequence and site-directed mutation of the gene for ribosomal protein L41 from Candida glycerinogenes.</title>
        <authorList>
            <person name="Li Y."/>
            <person name="Shen W."/>
            <person name="Tang X."/>
            <person name="Rao Z."/>
            <person name="Fang H."/>
            <person name="Zhuge J."/>
        </authorList>
    </citation>
    <scope>NUCLEOTIDE SEQUENCE [GENOMIC DNA]</scope>
</reference>
<sequence>MVNVPKTRKTYCKGKQCKKHTQHKVTQYKAGKASLYSQGKRRYDRKQSGYGGQTKPVFHKKAKTTKKVVLRLECVACKTKLQLSLKRCKHFELGGDKKQKGAALQF</sequence>
<feature type="initiator methionine" description="Removed" evidence="1">
    <location>
        <position position="1"/>
    </location>
</feature>
<feature type="chain" id="PRO_0000260177" description="Large ribosomal subunit protein eL42">
    <location>
        <begin position="2"/>
        <end position="106"/>
    </location>
</feature>
<feature type="region of interest" description="Disordered" evidence="2">
    <location>
        <begin position="37"/>
        <end position="56"/>
    </location>
</feature>
<protein>
    <recommendedName>
        <fullName evidence="3">Large ribosomal subunit protein eL42</fullName>
    </recommendedName>
    <alternativeName>
        <fullName>60S ribosomal protein L41</fullName>
    </alternativeName>
    <alternativeName>
        <fullName>60S ribosomal protein L44</fullName>
    </alternativeName>
</protein>
<comment type="similarity">
    <text evidence="3">Belongs to the eukaryotic ribosomal protein eL42 family.</text>
</comment>
<gene>
    <name type="primary">RPL44</name>
    <name type="synonym">RPL41</name>
</gene>
<name>RL44_PICKU</name>
<evidence type="ECO:0000250" key="1"/>
<evidence type="ECO:0000256" key="2">
    <source>
        <dbReference type="SAM" id="MobiDB-lite"/>
    </source>
</evidence>
<evidence type="ECO:0000305" key="3"/>
<keyword id="KW-0687">Ribonucleoprotein</keyword>
<keyword id="KW-0689">Ribosomal protein</keyword>